<keyword id="KW-0007">Acetylation</keyword>
<keyword id="KW-0963">Cytoplasm</keyword>
<keyword id="KW-0227">DNA damage</keyword>
<keyword id="KW-0234">DNA repair</keyword>
<keyword id="KW-0378">Hydrolase</keyword>
<keyword id="KW-1017">Isopeptide bond</keyword>
<keyword id="KW-0460">Magnesium</keyword>
<keyword id="KW-0479">Metal-binding</keyword>
<keyword id="KW-0540">Nuclease</keyword>
<keyword id="KW-0539">Nucleus</keyword>
<keyword id="KW-0597">Phosphoprotein</keyword>
<keyword id="KW-1185">Reference proteome</keyword>
<keyword id="KW-0832">Ubl conjugation</keyword>
<protein>
    <recommendedName>
        <fullName>Tyrosyl-DNA phosphodiesterase 2</fullName>
        <shortName>Tyr-DNA phosphodiesterase 2</shortName>
        <ecNumber evidence="2">3.1.4.-</ecNumber>
    </recommendedName>
    <alternativeName>
        <fullName>5'-tyrosyl-DNA phosphodiesterase</fullName>
        <shortName>5'-Tyr-DNA phosphodiesterase</shortName>
    </alternativeName>
    <alternativeName>
        <fullName>TRAF and TNF receptor-associated protein</fullName>
    </alternativeName>
</protein>
<evidence type="ECO:0000250" key="1">
    <source>
        <dbReference type="UniProtKB" id="O95551"/>
    </source>
</evidence>
<evidence type="ECO:0000250" key="2">
    <source>
        <dbReference type="UniProtKB" id="Q9JJX7"/>
    </source>
</evidence>
<evidence type="ECO:0000256" key="3">
    <source>
        <dbReference type="SAM" id="MobiDB-lite"/>
    </source>
</evidence>
<evidence type="ECO:0000305" key="4"/>
<proteinExistence type="evidence at transcript level"/>
<gene>
    <name type="primary">TDP2</name>
    <name type="synonym">TTRAP</name>
</gene>
<feature type="chain" id="PRO_0000390449" description="Tyrosyl-DNA phosphodiesterase 2">
    <location>
        <begin position="1"/>
        <end position="364"/>
    </location>
</feature>
<feature type="region of interest" description="Disordered" evidence="3">
    <location>
        <begin position="1"/>
        <end position="21"/>
    </location>
</feature>
<feature type="region of interest" description="Disordered" evidence="3">
    <location>
        <begin position="68"/>
        <end position="108"/>
    </location>
</feature>
<feature type="region of interest" description="Interaction with 5' end of substrate DNA" evidence="2">
    <location>
        <begin position="122"/>
        <end position="126"/>
    </location>
</feature>
<feature type="region of interest" description="Interaction with 5' end of substrate DNA" evidence="2">
    <location>
        <begin position="228"/>
        <end position="233"/>
    </location>
</feature>
<feature type="region of interest" description="Interaction with 5' end of substrate DNA" evidence="2">
    <location>
        <begin position="266"/>
        <end position="268"/>
    </location>
</feature>
<feature type="compositionally biased region" description="Low complexity" evidence="3">
    <location>
        <begin position="1"/>
        <end position="10"/>
    </location>
</feature>
<feature type="active site" description="Proton donor/acceptor" evidence="1">
    <location>
        <position position="264"/>
    </location>
</feature>
<feature type="binding site" evidence="2">
    <location>
        <position position="124"/>
    </location>
    <ligand>
        <name>Mg(2+)</name>
        <dbReference type="ChEBI" id="CHEBI:18420"/>
    </ligand>
</feature>
<feature type="binding site" evidence="2">
    <location>
        <position position="154"/>
    </location>
    <ligand>
        <name>Mg(2+)</name>
        <dbReference type="ChEBI" id="CHEBI:18420"/>
    </ligand>
</feature>
<feature type="site" description="Interaction with 5' end of substrate DNA" evidence="2">
    <location>
        <position position="180"/>
    </location>
</feature>
<feature type="site" description="Interaction with 5' end of substrate DNA" evidence="2">
    <location>
        <position position="299"/>
    </location>
</feature>
<feature type="site" description="Interaction with 5' end of substrate DNA" evidence="2">
    <location>
        <position position="317"/>
    </location>
</feature>
<feature type="site" description="Interaction with 5' end of substrate DNA" evidence="2">
    <location>
        <position position="353"/>
    </location>
</feature>
<feature type="modified residue" description="N-acetylmethionine" evidence="1">
    <location>
        <position position="1"/>
    </location>
</feature>
<feature type="modified residue" description="Phosphothreonine; by ACVR1B" evidence="1">
    <location>
        <position position="88"/>
    </location>
</feature>
<feature type="modified residue" description="Phosphothreonine; by ACVR1B" evidence="1">
    <location>
        <position position="92"/>
    </location>
</feature>
<feature type="modified residue" description="Phosphoserine" evidence="1">
    <location>
        <position position="95"/>
    </location>
</feature>
<feature type="cross-link" description="Glycyl lysine isopeptide (Lys-Gly) (interchain with G-Cter in SUMO2)" evidence="1">
    <location>
        <position position="23"/>
    </location>
</feature>
<sequence length="364" mass="40826">MERNSGPEAGPEAELEEGEPEVKKRKLMCVEFASVASCDAAVAQCYLAENDWEMERALNSYFEPAVEESASESRPESLSEPGSCVDLTKEETNDSISSKTSTSEDKSVQQEDGSVFSFITWNIDGLDMNNLLERARGVCSYLTLYSPDVIFLQEVIPPYYAYLKKKASSYKIITGREEGYFTAIMLKKSRVKFKSQEIIPFPNTQMMRNLLCVHVSVSGNELCLMTSHLESTRGHAKERMNQFKMVLEKMQEAPGSATVIFAGDTNLRDQEVTKCGGLPNNILDVWEFLGKPKHCQYTWDTQMNSNLGIAANCKLRFDRIFFRAAAEGGHIIPQSLDLLGLEKLDCGRFPSDHWGLLCTLDVIL</sequence>
<reference key="1">
    <citation type="submission" date="2007-03" db="EMBL/GenBank/DDBJ databases">
        <authorList>
            <consortium name="NIH - Mammalian Gene Collection (MGC) project"/>
        </authorList>
    </citation>
    <scope>NUCLEOTIDE SEQUENCE [LARGE SCALE MRNA]</scope>
    <source>
        <strain>Hereford</strain>
        <tissue>Basal ganglia</tissue>
    </source>
</reference>
<organism>
    <name type="scientific">Bos taurus</name>
    <name type="common">Bovine</name>
    <dbReference type="NCBI Taxonomy" id="9913"/>
    <lineage>
        <taxon>Eukaryota</taxon>
        <taxon>Metazoa</taxon>
        <taxon>Chordata</taxon>
        <taxon>Craniata</taxon>
        <taxon>Vertebrata</taxon>
        <taxon>Euteleostomi</taxon>
        <taxon>Mammalia</taxon>
        <taxon>Eutheria</taxon>
        <taxon>Laurasiatheria</taxon>
        <taxon>Artiodactyla</taxon>
        <taxon>Ruminantia</taxon>
        <taxon>Pecora</taxon>
        <taxon>Bovidae</taxon>
        <taxon>Bovinae</taxon>
        <taxon>Bos</taxon>
    </lineage>
</organism>
<dbReference type="EC" id="3.1.4.-" evidence="2"/>
<dbReference type="EMBL" id="BC134603">
    <property type="protein sequence ID" value="AAI34604.1"/>
    <property type="molecule type" value="mRNA"/>
</dbReference>
<dbReference type="RefSeq" id="NP_001098811.1">
    <property type="nucleotide sequence ID" value="NM_001105341.1"/>
</dbReference>
<dbReference type="SMR" id="A7YWI9"/>
<dbReference type="FunCoup" id="A7YWI9">
    <property type="interactions" value="1318"/>
</dbReference>
<dbReference type="STRING" id="9913.ENSBTAP00000000472"/>
<dbReference type="PaxDb" id="9913-ENSBTAP00000000472"/>
<dbReference type="Ensembl" id="ENSBTAT00000000472.6">
    <property type="protein sequence ID" value="ENSBTAP00000000472.5"/>
    <property type="gene ID" value="ENSBTAG00000000365.6"/>
</dbReference>
<dbReference type="GeneID" id="507579"/>
<dbReference type="KEGG" id="bta:507579"/>
<dbReference type="CTD" id="51567"/>
<dbReference type="VEuPathDB" id="HostDB:ENSBTAG00000000365"/>
<dbReference type="VGNC" id="VGNC:35714">
    <property type="gene designation" value="TDP2"/>
</dbReference>
<dbReference type="eggNOG" id="KOG2756">
    <property type="taxonomic scope" value="Eukaryota"/>
</dbReference>
<dbReference type="GeneTree" id="ENSGT00390000014242"/>
<dbReference type="HOGENOM" id="CLU_047318_0_0_1"/>
<dbReference type="InParanoid" id="A7YWI9"/>
<dbReference type="OMA" id="HRFDRIF"/>
<dbReference type="OrthoDB" id="9975959at2759"/>
<dbReference type="TreeFam" id="TF314813"/>
<dbReference type="Reactome" id="R-BTA-5693571">
    <property type="pathway name" value="Nonhomologous End-Joining (NHEJ)"/>
</dbReference>
<dbReference type="Proteomes" id="UP000009136">
    <property type="component" value="Chromosome 23"/>
</dbReference>
<dbReference type="Bgee" id="ENSBTAG00000000365">
    <property type="expression patterns" value="Expressed in duodenum and 104 other cell types or tissues"/>
</dbReference>
<dbReference type="GO" id="GO:0016235">
    <property type="term" value="C:aggresome"/>
    <property type="evidence" value="ECO:0007669"/>
    <property type="project" value="Ensembl"/>
</dbReference>
<dbReference type="GO" id="GO:0005737">
    <property type="term" value="C:cytoplasm"/>
    <property type="evidence" value="ECO:0000318"/>
    <property type="project" value="GO_Central"/>
</dbReference>
<dbReference type="GO" id="GO:0005730">
    <property type="term" value="C:nucleolus"/>
    <property type="evidence" value="ECO:0007669"/>
    <property type="project" value="UniProtKB-SubCell"/>
</dbReference>
<dbReference type="GO" id="GO:0016605">
    <property type="term" value="C:PML body"/>
    <property type="evidence" value="ECO:0000250"/>
    <property type="project" value="UniProtKB"/>
</dbReference>
<dbReference type="GO" id="GO:0070260">
    <property type="term" value="F:5'-tyrosyl-DNA phosphodiesterase activity"/>
    <property type="evidence" value="ECO:0000250"/>
    <property type="project" value="UniProtKB"/>
</dbReference>
<dbReference type="GO" id="GO:0000287">
    <property type="term" value="F:magnesium ion binding"/>
    <property type="evidence" value="ECO:0000250"/>
    <property type="project" value="UniProtKB"/>
</dbReference>
<dbReference type="GO" id="GO:0030145">
    <property type="term" value="F:manganese ion binding"/>
    <property type="evidence" value="ECO:0000250"/>
    <property type="project" value="UniProtKB"/>
</dbReference>
<dbReference type="GO" id="GO:0004518">
    <property type="term" value="F:nuclease activity"/>
    <property type="evidence" value="ECO:0007669"/>
    <property type="project" value="UniProtKB-KW"/>
</dbReference>
<dbReference type="GO" id="GO:0003697">
    <property type="term" value="F:single-stranded DNA binding"/>
    <property type="evidence" value="ECO:0000250"/>
    <property type="project" value="UniProtKB"/>
</dbReference>
<dbReference type="GO" id="GO:0036317">
    <property type="term" value="F:tyrosyl-RNA phosphodiesterase activity"/>
    <property type="evidence" value="ECO:0007669"/>
    <property type="project" value="Ensembl"/>
</dbReference>
<dbReference type="GO" id="GO:0006302">
    <property type="term" value="P:double-strand break repair"/>
    <property type="evidence" value="ECO:0000250"/>
    <property type="project" value="UniProtKB"/>
</dbReference>
<dbReference type="GO" id="GO:0048666">
    <property type="term" value="P:neuron development"/>
    <property type="evidence" value="ECO:0000250"/>
    <property type="project" value="UniProtKB"/>
</dbReference>
<dbReference type="CDD" id="cd09080">
    <property type="entry name" value="TDP2"/>
    <property type="match status" value="1"/>
</dbReference>
<dbReference type="CDD" id="cd14344">
    <property type="entry name" value="UBA_TYDP2"/>
    <property type="match status" value="1"/>
</dbReference>
<dbReference type="FunFam" id="1.10.8.10:FF:000089">
    <property type="entry name" value="Tyrosyl-DNA phosphodiesterase 2"/>
    <property type="match status" value="1"/>
</dbReference>
<dbReference type="FunFam" id="3.60.10.10:FF:000024">
    <property type="entry name" value="Tyrosyl-DNA phosphodiesterase 2"/>
    <property type="match status" value="1"/>
</dbReference>
<dbReference type="Gene3D" id="1.10.8.10">
    <property type="entry name" value="DNA helicase RuvA subunit, C-terminal domain"/>
    <property type="match status" value="1"/>
</dbReference>
<dbReference type="Gene3D" id="3.60.10.10">
    <property type="entry name" value="Endonuclease/exonuclease/phosphatase"/>
    <property type="match status" value="1"/>
</dbReference>
<dbReference type="InterPro" id="IPR036691">
    <property type="entry name" value="Endo/exonu/phosph_ase_sf"/>
</dbReference>
<dbReference type="InterPro" id="IPR005135">
    <property type="entry name" value="Endo/exonuclease/phosphatase"/>
</dbReference>
<dbReference type="InterPro" id="IPR051547">
    <property type="entry name" value="TDP2-like"/>
</dbReference>
<dbReference type="InterPro" id="IPR009060">
    <property type="entry name" value="UBA-like_sf"/>
</dbReference>
<dbReference type="PANTHER" id="PTHR15822">
    <property type="entry name" value="TRAF AND TNF RECEPTOR-ASSOCIATED PROTEIN"/>
    <property type="match status" value="1"/>
</dbReference>
<dbReference type="PANTHER" id="PTHR15822:SF4">
    <property type="entry name" value="TYROSYL-DNA PHOSPHODIESTERASE 2"/>
    <property type="match status" value="1"/>
</dbReference>
<dbReference type="Pfam" id="PF03372">
    <property type="entry name" value="Exo_endo_phos"/>
    <property type="match status" value="1"/>
</dbReference>
<dbReference type="Pfam" id="PF14555">
    <property type="entry name" value="UBA_4"/>
    <property type="match status" value="1"/>
</dbReference>
<dbReference type="SUPFAM" id="SSF56219">
    <property type="entry name" value="DNase I-like"/>
    <property type="match status" value="1"/>
</dbReference>
<dbReference type="SUPFAM" id="SSF46934">
    <property type="entry name" value="UBA-like"/>
    <property type="match status" value="1"/>
</dbReference>
<comment type="function">
    <text evidence="1">DNA repair enzyme that can remove a variety of covalent adducts from DNA through hydrolysis of a 5'-phosphodiester bond, giving rise to DNA with a free 5' phosphate. Catalyzes the hydrolysis of dead-end complexes between DNA and the topoisomerase 2 (TOP2) active site tyrosine residue. The 5'-tyrosyl DNA phosphodiesterase activity can enable the repair of TOP2-induced DNA double-strand breaks/DSBs without the need for nuclease activity, creating a 'clean' DSB with 5'-phosphate termini that are ready for ligation. Thereby, protects the transcription of many genes involved in neurological development and maintenance from the abortive activity of TOP2. Hydrolyzes 5'-phosphoglycolates on protruding 5' ends on DSBs due to DNA damage by radiation and free radicals. Has preference for single-stranded DNA or duplex DNA with a 4 base pair overhang as substrate. Also has 3'-tyrosyl DNA phosphodiesterase activity, but less efficiently and much slower than TDP1. Constitutes the major if not only 5'-tyrosyl-DNA phosphodiesterase in cells. Also acts as an adapter by participating in the specific activation of MAP3K7/TAK1 in response to TGF-beta: associates with components of the TGF-beta receptor-TRAF6-TAK1 signaling module and promotes their ubiquitination dependent complex formation. Involved in non-canonical TGF-beta induced signaling routes. May also act as a negative regulator of ETS1 and may inhibit NF-kappa-B activation. Acts as a regulator of ribosome biogenesis following stress.</text>
</comment>
<comment type="cofactor">
    <cofactor evidence="2">
        <name>Mg(2+)</name>
        <dbReference type="ChEBI" id="CHEBI:18420"/>
    </cofactor>
    <cofactor evidence="2">
        <name>Mn(2+)</name>
        <dbReference type="ChEBI" id="CHEBI:29035"/>
    </cofactor>
    <text evidence="2">Binds 1 magnesium or manganese ion per subunit.</text>
</comment>
<comment type="subunit">
    <text evidence="1">Interacts with TRAF2, TRAF3, TRAF5, TRAF6, TNFRSF8/CD30, TNFRSF5/CD40, TNFRSF1B/TNF-R75, ETS1, ETS2, FLI1, SMAD3 and ACVR1B/ALK4.</text>
</comment>
<comment type="subcellular location">
    <subcellularLocation>
        <location evidence="1">Nucleus</location>
    </subcellularLocation>
    <subcellularLocation>
        <location evidence="1">Nucleus</location>
        <location evidence="1">PML body</location>
    </subcellularLocation>
    <subcellularLocation>
        <location evidence="1">Nucleus</location>
        <location evidence="1">Nucleolus</location>
    </subcellularLocation>
    <subcellularLocation>
        <location evidence="1">Cytoplasm</location>
    </subcellularLocation>
    <text evidence="1">Localizes to nucleolar cavities following stress; localization to nucleolus is dependent on PML protein.</text>
</comment>
<comment type="PTM">
    <text evidence="1">Ubiquitinated by TRAF6.</text>
</comment>
<comment type="similarity">
    <text evidence="4">Belongs to the CCR4/nocturin family.</text>
</comment>
<name>TYDP2_BOVIN</name>
<accession>A7YWI9</accession>